<feature type="chain" id="PRO_1000074355" description="SsrA-binding protein">
    <location>
        <begin position="1"/>
        <end position="156"/>
    </location>
</feature>
<feature type="region of interest" description="Disordered" evidence="2">
    <location>
        <begin position="135"/>
        <end position="156"/>
    </location>
</feature>
<evidence type="ECO:0000255" key="1">
    <source>
        <dbReference type="HAMAP-Rule" id="MF_00023"/>
    </source>
</evidence>
<evidence type="ECO:0000256" key="2">
    <source>
        <dbReference type="SAM" id="MobiDB-lite"/>
    </source>
</evidence>
<dbReference type="EMBL" id="CP000750">
    <property type="protein sequence ID" value="ABS05242.1"/>
    <property type="molecule type" value="Genomic_DNA"/>
</dbReference>
<dbReference type="RefSeq" id="WP_012086476.1">
    <property type="nucleotide sequence ID" value="NC_009664.2"/>
</dbReference>
<dbReference type="SMR" id="A6WEK3"/>
<dbReference type="STRING" id="266940.Krad_3779"/>
<dbReference type="KEGG" id="kra:Krad_3779"/>
<dbReference type="eggNOG" id="COG0691">
    <property type="taxonomic scope" value="Bacteria"/>
</dbReference>
<dbReference type="HOGENOM" id="CLU_108953_2_1_11"/>
<dbReference type="OrthoDB" id="9805462at2"/>
<dbReference type="Proteomes" id="UP000001116">
    <property type="component" value="Chromosome"/>
</dbReference>
<dbReference type="GO" id="GO:0005829">
    <property type="term" value="C:cytosol"/>
    <property type="evidence" value="ECO:0007669"/>
    <property type="project" value="TreeGrafter"/>
</dbReference>
<dbReference type="GO" id="GO:0003723">
    <property type="term" value="F:RNA binding"/>
    <property type="evidence" value="ECO:0007669"/>
    <property type="project" value="UniProtKB-UniRule"/>
</dbReference>
<dbReference type="GO" id="GO:0070929">
    <property type="term" value="P:trans-translation"/>
    <property type="evidence" value="ECO:0007669"/>
    <property type="project" value="UniProtKB-UniRule"/>
</dbReference>
<dbReference type="CDD" id="cd09294">
    <property type="entry name" value="SmpB"/>
    <property type="match status" value="1"/>
</dbReference>
<dbReference type="Gene3D" id="2.40.280.10">
    <property type="match status" value="1"/>
</dbReference>
<dbReference type="HAMAP" id="MF_00023">
    <property type="entry name" value="SmpB"/>
    <property type="match status" value="1"/>
</dbReference>
<dbReference type="InterPro" id="IPR023620">
    <property type="entry name" value="SmpB"/>
</dbReference>
<dbReference type="InterPro" id="IPR000037">
    <property type="entry name" value="SsrA-bd_prot"/>
</dbReference>
<dbReference type="InterPro" id="IPR020081">
    <property type="entry name" value="SsrA-bd_prot_CS"/>
</dbReference>
<dbReference type="NCBIfam" id="NF003843">
    <property type="entry name" value="PRK05422.1"/>
    <property type="match status" value="1"/>
</dbReference>
<dbReference type="NCBIfam" id="TIGR00086">
    <property type="entry name" value="smpB"/>
    <property type="match status" value="1"/>
</dbReference>
<dbReference type="PANTHER" id="PTHR30308:SF2">
    <property type="entry name" value="SSRA-BINDING PROTEIN"/>
    <property type="match status" value="1"/>
</dbReference>
<dbReference type="PANTHER" id="PTHR30308">
    <property type="entry name" value="TMRNA-BINDING COMPONENT OF TRANS-TRANSLATION TAGGING COMPLEX"/>
    <property type="match status" value="1"/>
</dbReference>
<dbReference type="Pfam" id="PF01668">
    <property type="entry name" value="SmpB"/>
    <property type="match status" value="1"/>
</dbReference>
<dbReference type="SUPFAM" id="SSF74982">
    <property type="entry name" value="Small protein B (SmpB)"/>
    <property type="match status" value="1"/>
</dbReference>
<dbReference type="PROSITE" id="PS01317">
    <property type="entry name" value="SSRP"/>
    <property type="match status" value="1"/>
</dbReference>
<gene>
    <name evidence="1" type="primary">smpB</name>
    <name type="ordered locus">Krad_3779</name>
</gene>
<name>SSRP_KINRD</name>
<sequence>MPRETGRKVIASNRKARHDYFIDDVYEAGVSLMGTEVKALRMGRASLVDGFAHIDRGEMWLEGVHIPEYVQGTWTNHTPRRKRKLLLHREEIDRWAGKVRESGLTIVPLALYFLDGRVKVEIGLARGKKNYDKRHALRERQDRREADRAMSERKDR</sequence>
<protein>
    <recommendedName>
        <fullName evidence="1">SsrA-binding protein</fullName>
    </recommendedName>
    <alternativeName>
        <fullName evidence="1">Small protein B</fullName>
    </alternativeName>
</protein>
<reference key="1">
    <citation type="journal article" date="2008" name="PLoS ONE">
        <title>Survival in nuclear waste, extreme resistance, and potential applications gleaned from the genome sequence of Kineococcus radiotolerans SRS30216.</title>
        <authorList>
            <person name="Bagwell C.E."/>
            <person name="Bhat S."/>
            <person name="Hawkins G.M."/>
            <person name="Smith B.W."/>
            <person name="Biswas T."/>
            <person name="Hoover T.R."/>
            <person name="Saunders E."/>
            <person name="Han C.S."/>
            <person name="Tsodikov O.V."/>
            <person name="Shimkets L.J."/>
        </authorList>
    </citation>
    <scope>NUCLEOTIDE SEQUENCE [LARGE SCALE GENOMIC DNA]</scope>
    <source>
        <strain>ATCC BAA-149 / DSM 14245 / SRS30216</strain>
    </source>
</reference>
<proteinExistence type="inferred from homology"/>
<keyword id="KW-0963">Cytoplasm</keyword>
<keyword id="KW-1185">Reference proteome</keyword>
<keyword id="KW-0694">RNA-binding</keyword>
<accession>A6WEK3</accession>
<comment type="function">
    <text evidence="1">Required for rescue of stalled ribosomes mediated by trans-translation. Binds to transfer-messenger RNA (tmRNA), required for stable association of tmRNA with ribosomes. tmRNA and SmpB together mimic tRNA shape, replacing the anticodon stem-loop with SmpB. tmRNA is encoded by the ssrA gene; the 2 termini fold to resemble tRNA(Ala) and it encodes a 'tag peptide', a short internal open reading frame. During trans-translation Ala-aminoacylated tmRNA acts like a tRNA, entering the A-site of stalled ribosomes, displacing the stalled mRNA. The ribosome then switches to translate the ORF on the tmRNA; the nascent peptide is terminated with the 'tag peptide' encoded by the tmRNA and targeted for degradation. The ribosome is freed to recommence translation, which seems to be the essential function of trans-translation.</text>
</comment>
<comment type="subcellular location">
    <subcellularLocation>
        <location evidence="1">Cytoplasm</location>
    </subcellularLocation>
    <text evidence="1">The tmRNA-SmpB complex associates with stalled 70S ribosomes.</text>
</comment>
<comment type="similarity">
    <text evidence="1">Belongs to the SmpB family.</text>
</comment>
<organism>
    <name type="scientific">Kineococcus radiotolerans (strain ATCC BAA-149 / DSM 14245 / SRS30216)</name>
    <dbReference type="NCBI Taxonomy" id="266940"/>
    <lineage>
        <taxon>Bacteria</taxon>
        <taxon>Bacillati</taxon>
        <taxon>Actinomycetota</taxon>
        <taxon>Actinomycetes</taxon>
        <taxon>Kineosporiales</taxon>
        <taxon>Kineosporiaceae</taxon>
        <taxon>Kineococcus</taxon>
    </lineage>
</organism>